<name>CA1S2_CONPL</name>
<comment type="function">
    <text evidence="2">Alpha-conopeptides-like may act on postsynaptic membranes, they bind to the nicotinic acetylcholine receptors (nAChR) and thus inhibit them (By similarity). Has possibly a distinct nAChR binding mode from other alpha-conotoxins, due to a different three residue motif (lacks the Ser-Xaa-Pro motif) (By similarity).</text>
</comment>
<comment type="subcellular location">
    <subcellularLocation>
        <location evidence="5">Secreted</location>
    </subcellularLocation>
</comment>
<comment type="tissue specificity">
    <text evidence="5">Expressed by the salivary gland.</text>
</comment>
<comment type="domain">
    <text evidence="4">The cysteine framework is I (CC-C-C). Alpha4/7 pattern.</text>
</comment>
<comment type="similarity">
    <text evidence="4">Belongs to the conotoxin A superfamily.</text>
</comment>
<accession>P0C8U7</accession>
<organism>
    <name type="scientific">Conus pulicarius</name>
    <name type="common">Flea-bitten cone</name>
    <dbReference type="NCBI Taxonomy" id="93154"/>
    <lineage>
        <taxon>Eukaryota</taxon>
        <taxon>Metazoa</taxon>
        <taxon>Spiralia</taxon>
        <taxon>Lophotrochozoa</taxon>
        <taxon>Mollusca</taxon>
        <taxon>Gastropoda</taxon>
        <taxon>Caenogastropoda</taxon>
        <taxon>Neogastropoda</taxon>
        <taxon>Conoidea</taxon>
        <taxon>Conidae</taxon>
        <taxon>Conus</taxon>
    </lineage>
</organism>
<feature type="signal peptide" evidence="3">
    <location>
        <begin position="1"/>
        <end position="21"/>
    </location>
</feature>
<feature type="propeptide" id="PRO_0000366060" evidence="3">
    <location>
        <begin position="22"/>
        <end position="43"/>
    </location>
</feature>
<feature type="peptide" id="PRO_0000366061" description="Alpha-conotoxin-like PuSG1.2">
    <location>
        <begin position="44"/>
        <end position="63"/>
    </location>
</feature>
<feature type="region of interest" description="Lacks the Ser-Xaa-Pro motif that is crucial for potent interaction with nAChR" evidence="4">
    <location>
        <begin position="48"/>
        <end position="50"/>
    </location>
</feature>
<feature type="disulfide bond" evidence="1">
    <location>
        <begin position="46"/>
        <end position="52"/>
    </location>
</feature>
<feature type="disulfide bond" evidence="1">
    <location>
        <begin position="47"/>
        <end position="60"/>
    </location>
</feature>
<keyword id="KW-0008">Acetylcholine receptor inhibiting toxin</keyword>
<keyword id="KW-1015">Disulfide bond</keyword>
<keyword id="KW-0872">Ion channel impairing toxin</keyword>
<keyword id="KW-0528">Neurotoxin</keyword>
<keyword id="KW-0629">Postsynaptic neurotoxin</keyword>
<keyword id="KW-0964">Secreted</keyword>
<keyword id="KW-0732">Signal</keyword>
<keyword id="KW-0800">Toxin</keyword>
<reference key="1">
    <citation type="journal article" date="2008" name="Toxicon">
        <title>Alpha-conopeptides specifically expressed in the salivary gland of Conus pulicarius.</title>
        <authorList>
            <person name="Biggs J.S."/>
            <person name="Olivera B.M."/>
            <person name="Kantor Y.I."/>
        </authorList>
    </citation>
    <scope>NUCLEOTIDE SEQUENCE [MRNA]</scope>
    <source>
        <tissue>Salivary gland</tissue>
    </source>
</reference>
<protein>
    <recommendedName>
        <fullName>Alpha-conotoxin-like PuSG1.2</fullName>
    </recommendedName>
</protein>
<dbReference type="ConoServer" id="2862">
    <property type="toxin name" value="PuSG1.2 precursor"/>
</dbReference>
<dbReference type="GO" id="GO:0005576">
    <property type="term" value="C:extracellular region"/>
    <property type="evidence" value="ECO:0007669"/>
    <property type="project" value="UniProtKB-SubCell"/>
</dbReference>
<dbReference type="GO" id="GO:0035792">
    <property type="term" value="C:host cell postsynaptic membrane"/>
    <property type="evidence" value="ECO:0007669"/>
    <property type="project" value="UniProtKB-KW"/>
</dbReference>
<dbReference type="GO" id="GO:0030550">
    <property type="term" value="F:acetylcholine receptor inhibitor activity"/>
    <property type="evidence" value="ECO:0007669"/>
    <property type="project" value="UniProtKB-KW"/>
</dbReference>
<dbReference type="GO" id="GO:0099106">
    <property type="term" value="F:ion channel regulator activity"/>
    <property type="evidence" value="ECO:0007669"/>
    <property type="project" value="UniProtKB-KW"/>
</dbReference>
<dbReference type="GO" id="GO:0090729">
    <property type="term" value="F:toxin activity"/>
    <property type="evidence" value="ECO:0007669"/>
    <property type="project" value="UniProtKB-KW"/>
</dbReference>
<dbReference type="InterPro" id="IPR009958">
    <property type="entry name" value="Conotoxin_a-typ"/>
</dbReference>
<dbReference type="Pfam" id="PF07365">
    <property type="entry name" value="Toxin_8"/>
    <property type="match status" value="1"/>
</dbReference>
<proteinExistence type="inferred from homology"/>
<sequence length="63" mass="6518">MRCLALLVVTLLLFTATATTGASNGMNAAASGEAPDSISLAVRDDCCPDPACRQNHPEICPSR</sequence>
<evidence type="ECO:0000250" key="1">
    <source>
        <dbReference type="UniProtKB" id="P56636"/>
    </source>
</evidence>
<evidence type="ECO:0000250" key="2">
    <source>
        <dbReference type="UniProtKB" id="Q2I2R8"/>
    </source>
</evidence>
<evidence type="ECO:0000255" key="3"/>
<evidence type="ECO:0000305" key="4"/>
<evidence type="ECO:0000305" key="5">
    <source>
    </source>
</evidence>